<organism>
    <name type="scientific">Chromohalobacter salexigens (strain ATCC BAA-138 / DSM 3043 / CIP 106854 / NCIMB 13768 / 1H11)</name>
    <dbReference type="NCBI Taxonomy" id="290398"/>
    <lineage>
        <taxon>Bacteria</taxon>
        <taxon>Pseudomonadati</taxon>
        <taxon>Pseudomonadota</taxon>
        <taxon>Gammaproteobacteria</taxon>
        <taxon>Oceanospirillales</taxon>
        <taxon>Halomonadaceae</taxon>
        <taxon>Chromohalobacter</taxon>
    </lineage>
</organism>
<evidence type="ECO:0000255" key="1">
    <source>
        <dbReference type="HAMAP-Rule" id="MF_00272"/>
    </source>
</evidence>
<evidence type="ECO:0000255" key="2">
    <source>
        <dbReference type="PROSITE-ProRule" id="PRU01066"/>
    </source>
</evidence>
<sequence length="131" mass="14186">MSHIPANLRYTDSHEWVLDNGDGTVTIGITDHAQEALGDVVFVELPETGRELDAGEEFGVIESVKAASDLYLPLSGEIIAVNESLEDAPETVNDNPYEDGWIIKLKLAEPEALESLLDATAYDALVSAEED</sequence>
<reference key="1">
    <citation type="journal article" date="2011" name="Stand. Genomic Sci.">
        <title>Complete genome sequence of the halophilic and highly halotolerant Chromohalobacter salexigens type strain (1H11(T)).</title>
        <authorList>
            <person name="Copeland A."/>
            <person name="O'Connor K."/>
            <person name="Lucas S."/>
            <person name="Lapidus A."/>
            <person name="Berry K.W."/>
            <person name="Detter J.C."/>
            <person name="Del Rio T.G."/>
            <person name="Hammon N."/>
            <person name="Dalin E."/>
            <person name="Tice H."/>
            <person name="Pitluck S."/>
            <person name="Bruce D."/>
            <person name="Goodwin L."/>
            <person name="Han C."/>
            <person name="Tapia R."/>
            <person name="Saunders E."/>
            <person name="Schmutz J."/>
            <person name="Brettin T."/>
            <person name="Larimer F."/>
            <person name="Land M."/>
            <person name="Hauser L."/>
            <person name="Vargas C."/>
            <person name="Nieto J.J."/>
            <person name="Kyrpides N.C."/>
            <person name="Ivanova N."/>
            <person name="Goker M."/>
            <person name="Klenk H.P."/>
            <person name="Csonka L.N."/>
            <person name="Woyke T."/>
        </authorList>
    </citation>
    <scope>NUCLEOTIDE SEQUENCE [LARGE SCALE GENOMIC DNA]</scope>
    <source>
        <strain>ATCC BAA-138 / DSM 3043 / CIP 106854 / NCIMB 13768 / 1H11</strain>
    </source>
</reference>
<protein>
    <recommendedName>
        <fullName evidence="1">Glycine cleavage system H protein</fullName>
    </recommendedName>
</protein>
<comment type="function">
    <text evidence="1">The glycine cleavage system catalyzes the degradation of glycine. The H protein shuttles the methylamine group of glycine from the P protein to the T protein.</text>
</comment>
<comment type="cofactor">
    <cofactor evidence="1">
        <name>(R)-lipoate</name>
        <dbReference type="ChEBI" id="CHEBI:83088"/>
    </cofactor>
    <text evidence="1">Binds 1 lipoyl cofactor covalently.</text>
</comment>
<comment type="subunit">
    <text evidence="1">The glycine cleavage system is composed of four proteins: P, T, L and H.</text>
</comment>
<comment type="similarity">
    <text evidence="1">Belongs to the GcvH family.</text>
</comment>
<keyword id="KW-0450">Lipoyl</keyword>
<keyword id="KW-1185">Reference proteome</keyword>
<name>GCSH_CHRSD</name>
<feature type="chain" id="PRO_1000059178" description="Glycine cleavage system H protein">
    <location>
        <begin position="1"/>
        <end position="131"/>
    </location>
</feature>
<feature type="domain" description="Lipoyl-binding" evidence="2">
    <location>
        <begin position="24"/>
        <end position="106"/>
    </location>
</feature>
<feature type="modified residue" description="N6-lipoyllysine" evidence="1">
    <location>
        <position position="65"/>
    </location>
</feature>
<dbReference type="EMBL" id="CP000285">
    <property type="protein sequence ID" value="ABE59164.1"/>
    <property type="molecule type" value="Genomic_DNA"/>
</dbReference>
<dbReference type="RefSeq" id="WP_011507110.1">
    <property type="nucleotide sequence ID" value="NC_007963.1"/>
</dbReference>
<dbReference type="SMR" id="Q1QWJ4"/>
<dbReference type="STRING" id="290398.Csal_1812"/>
<dbReference type="GeneID" id="95334525"/>
<dbReference type="KEGG" id="csa:Csal_1812"/>
<dbReference type="eggNOG" id="COG0509">
    <property type="taxonomic scope" value="Bacteria"/>
</dbReference>
<dbReference type="HOGENOM" id="CLU_097408_2_2_6"/>
<dbReference type="OrthoDB" id="9796712at2"/>
<dbReference type="Proteomes" id="UP000000239">
    <property type="component" value="Chromosome"/>
</dbReference>
<dbReference type="GO" id="GO:0005829">
    <property type="term" value="C:cytosol"/>
    <property type="evidence" value="ECO:0007669"/>
    <property type="project" value="TreeGrafter"/>
</dbReference>
<dbReference type="GO" id="GO:0005960">
    <property type="term" value="C:glycine cleavage complex"/>
    <property type="evidence" value="ECO:0007669"/>
    <property type="project" value="InterPro"/>
</dbReference>
<dbReference type="GO" id="GO:0019464">
    <property type="term" value="P:glycine decarboxylation via glycine cleavage system"/>
    <property type="evidence" value="ECO:0007669"/>
    <property type="project" value="UniProtKB-UniRule"/>
</dbReference>
<dbReference type="CDD" id="cd06848">
    <property type="entry name" value="GCS_H"/>
    <property type="match status" value="1"/>
</dbReference>
<dbReference type="Gene3D" id="2.40.50.100">
    <property type="match status" value="1"/>
</dbReference>
<dbReference type="HAMAP" id="MF_00272">
    <property type="entry name" value="GcvH"/>
    <property type="match status" value="1"/>
</dbReference>
<dbReference type="InterPro" id="IPR003016">
    <property type="entry name" value="2-oxoA_DH_lipoyl-BS"/>
</dbReference>
<dbReference type="InterPro" id="IPR000089">
    <property type="entry name" value="Biotin_lipoyl"/>
</dbReference>
<dbReference type="InterPro" id="IPR002930">
    <property type="entry name" value="GCV_H"/>
</dbReference>
<dbReference type="InterPro" id="IPR033753">
    <property type="entry name" value="GCV_H/Fam206"/>
</dbReference>
<dbReference type="InterPro" id="IPR017453">
    <property type="entry name" value="GCV_H_sub"/>
</dbReference>
<dbReference type="InterPro" id="IPR011053">
    <property type="entry name" value="Single_hybrid_motif"/>
</dbReference>
<dbReference type="NCBIfam" id="TIGR00527">
    <property type="entry name" value="gcvH"/>
    <property type="match status" value="1"/>
</dbReference>
<dbReference type="NCBIfam" id="NF002270">
    <property type="entry name" value="PRK01202.1"/>
    <property type="match status" value="1"/>
</dbReference>
<dbReference type="PANTHER" id="PTHR11715">
    <property type="entry name" value="GLYCINE CLEAVAGE SYSTEM H PROTEIN"/>
    <property type="match status" value="1"/>
</dbReference>
<dbReference type="PANTHER" id="PTHR11715:SF3">
    <property type="entry name" value="GLYCINE CLEAVAGE SYSTEM H PROTEIN-RELATED"/>
    <property type="match status" value="1"/>
</dbReference>
<dbReference type="Pfam" id="PF01597">
    <property type="entry name" value="GCV_H"/>
    <property type="match status" value="1"/>
</dbReference>
<dbReference type="SUPFAM" id="SSF51230">
    <property type="entry name" value="Single hybrid motif"/>
    <property type="match status" value="1"/>
</dbReference>
<dbReference type="PROSITE" id="PS50968">
    <property type="entry name" value="BIOTINYL_LIPOYL"/>
    <property type="match status" value="1"/>
</dbReference>
<dbReference type="PROSITE" id="PS00189">
    <property type="entry name" value="LIPOYL"/>
    <property type="match status" value="1"/>
</dbReference>
<accession>Q1QWJ4</accession>
<proteinExistence type="inferred from homology"/>
<gene>
    <name evidence="1" type="primary">gcvH</name>
    <name type="ordered locus">Csal_1812</name>
</gene>